<evidence type="ECO:0000255" key="1">
    <source>
        <dbReference type="HAMAP-Rule" id="MF_00041"/>
    </source>
</evidence>
<dbReference type="EC" id="6.1.1.16" evidence="1"/>
<dbReference type="EMBL" id="CP001291">
    <property type="protein sequence ID" value="ACK71134.1"/>
    <property type="molecule type" value="Genomic_DNA"/>
</dbReference>
<dbReference type="RefSeq" id="WP_015954735.1">
    <property type="nucleotide sequence ID" value="NC_011729.1"/>
</dbReference>
<dbReference type="SMR" id="B7K7T8"/>
<dbReference type="STRING" id="65393.PCC7424_2722"/>
<dbReference type="KEGG" id="cyc:PCC7424_2722"/>
<dbReference type="eggNOG" id="COG0215">
    <property type="taxonomic scope" value="Bacteria"/>
</dbReference>
<dbReference type="HOGENOM" id="CLU_013528_0_1_3"/>
<dbReference type="OrthoDB" id="9815130at2"/>
<dbReference type="Proteomes" id="UP000002384">
    <property type="component" value="Chromosome"/>
</dbReference>
<dbReference type="GO" id="GO:0005829">
    <property type="term" value="C:cytosol"/>
    <property type="evidence" value="ECO:0007669"/>
    <property type="project" value="TreeGrafter"/>
</dbReference>
<dbReference type="GO" id="GO:0005524">
    <property type="term" value="F:ATP binding"/>
    <property type="evidence" value="ECO:0007669"/>
    <property type="project" value="UniProtKB-UniRule"/>
</dbReference>
<dbReference type="GO" id="GO:0004817">
    <property type="term" value="F:cysteine-tRNA ligase activity"/>
    <property type="evidence" value="ECO:0007669"/>
    <property type="project" value="UniProtKB-UniRule"/>
</dbReference>
<dbReference type="GO" id="GO:0008270">
    <property type="term" value="F:zinc ion binding"/>
    <property type="evidence" value="ECO:0007669"/>
    <property type="project" value="UniProtKB-UniRule"/>
</dbReference>
<dbReference type="GO" id="GO:0006423">
    <property type="term" value="P:cysteinyl-tRNA aminoacylation"/>
    <property type="evidence" value="ECO:0007669"/>
    <property type="project" value="UniProtKB-UniRule"/>
</dbReference>
<dbReference type="CDD" id="cd00672">
    <property type="entry name" value="CysRS_core"/>
    <property type="match status" value="1"/>
</dbReference>
<dbReference type="FunFam" id="3.40.50.620:FF:000009">
    <property type="entry name" value="Cysteine--tRNA ligase"/>
    <property type="match status" value="1"/>
</dbReference>
<dbReference type="Gene3D" id="1.20.120.1910">
    <property type="entry name" value="Cysteine-tRNA ligase, C-terminal anti-codon recognition domain"/>
    <property type="match status" value="1"/>
</dbReference>
<dbReference type="Gene3D" id="3.40.50.620">
    <property type="entry name" value="HUPs"/>
    <property type="match status" value="1"/>
</dbReference>
<dbReference type="HAMAP" id="MF_00041">
    <property type="entry name" value="Cys_tRNA_synth"/>
    <property type="match status" value="1"/>
</dbReference>
<dbReference type="InterPro" id="IPR015803">
    <property type="entry name" value="Cys-tRNA-ligase"/>
</dbReference>
<dbReference type="InterPro" id="IPR015273">
    <property type="entry name" value="Cys-tRNA-synt_Ia_DALR"/>
</dbReference>
<dbReference type="InterPro" id="IPR024909">
    <property type="entry name" value="Cys-tRNA/MSH_ligase"/>
</dbReference>
<dbReference type="InterPro" id="IPR014729">
    <property type="entry name" value="Rossmann-like_a/b/a_fold"/>
</dbReference>
<dbReference type="InterPro" id="IPR032678">
    <property type="entry name" value="tRNA-synt_1_cat_dom"/>
</dbReference>
<dbReference type="InterPro" id="IPR009080">
    <property type="entry name" value="tRNAsynth_Ia_anticodon-bd"/>
</dbReference>
<dbReference type="NCBIfam" id="TIGR00435">
    <property type="entry name" value="cysS"/>
    <property type="match status" value="1"/>
</dbReference>
<dbReference type="PANTHER" id="PTHR10890:SF3">
    <property type="entry name" value="CYSTEINE--TRNA LIGASE, CYTOPLASMIC"/>
    <property type="match status" value="1"/>
</dbReference>
<dbReference type="PANTHER" id="PTHR10890">
    <property type="entry name" value="CYSTEINYL-TRNA SYNTHETASE"/>
    <property type="match status" value="1"/>
</dbReference>
<dbReference type="Pfam" id="PF09190">
    <property type="entry name" value="DALR_2"/>
    <property type="match status" value="1"/>
</dbReference>
<dbReference type="Pfam" id="PF01406">
    <property type="entry name" value="tRNA-synt_1e"/>
    <property type="match status" value="1"/>
</dbReference>
<dbReference type="PRINTS" id="PR00983">
    <property type="entry name" value="TRNASYNTHCYS"/>
</dbReference>
<dbReference type="SMART" id="SM00840">
    <property type="entry name" value="DALR_2"/>
    <property type="match status" value="1"/>
</dbReference>
<dbReference type="SUPFAM" id="SSF47323">
    <property type="entry name" value="Anticodon-binding domain of a subclass of class I aminoacyl-tRNA synthetases"/>
    <property type="match status" value="1"/>
</dbReference>
<dbReference type="SUPFAM" id="SSF52374">
    <property type="entry name" value="Nucleotidylyl transferase"/>
    <property type="match status" value="1"/>
</dbReference>
<gene>
    <name evidence="1" type="primary">cysS</name>
    <name type="ordered locus">PCC7424_2722</name>
</gene>
<protein>
    <recommendedName>
        <fullName evidence="1">Cysteine--tRNA ligase</fullName>
        <ecNumber evidence="1">6.1.1.16</ecNumber>
    </recommendedName>
    <alternativeName>
        <fullName evidence="1">Cysteinyl-tRNA synthetase</fullName>
        <shortName evidence="1">CysRS</shortName>
    </alternativeName>
</protein>
<comment type="catalytic activity">
    <reaction evidence="1">
        <text>tRNA(Cys) + L-cysteine + ATP = L-cysteinyl-tRNA(Cys) + AMP + diphosphate</text>
        <dbReference type="Rhea" id="RHEA:17773"/>
        <dbReference type="Rhea" id="RHEA-COMP:9661"/>
        <dbReference type="Rhea" id="RHEA-COMP:9679"/>
        <dbReference type="ChEBI" id="CHEBI:30616"/>
        <dbReference type="ChEBI" id="CHEBI:33019"/>
        <dbReference type="ChEBI" id="CHEBI:35235"/>
        <dbReference type="ChEBI" id="CHEBI:78442"/>
        <dbReference type="ChEBI" id="CHEBI:78517"/>
        <dbReference type="ChEBI" id="CHEBI:456215"/>
        <dbReference type="EC" id="6.1.1.16"/>
    </reaction>
</comment>
<comment type="cofactor">
    <cofactor evidence="1">
        <name>Zn(2+)</name>
        <dbReference type="ChEBI" id="CHEBI:29105"/>
    </cofactor>
    <text evidence="1">Binds 1 zinc ion per subunit.</text>
</comment>
<comment type="subunit">
    <text evidence="1">Monomer.</text>
</comment>
<comment type="subcellular location">
    <subcellularLocation>
        <location evidence="1">Cytoplasm</location>
    </subcellularLocation>
</comment>
<comment type="similarity">
    <text evidence="1">Belongs to the class-I aminoacyl-tRNA synthetase family.</text>
</comment>
<proteinExistence type="inferred from homology"/>
<sequence>MTLTIYNTLTRQKEPFEPLEPGKVRMYCCGITVYDYCHLGHARTCLVWDVVRRYLQWRGYQVQYIQNFTDIDDKILNRARKEGTSMEDVSERFIKAYFEDMDRLHIQKADAYPRATHTLDGIKRLVYELEQKGYAYPADGDVYYSVRSFSDYGKLSGRKLEDLQAGASGRVDLEDSESQKKKDPFDFALWKAAKPGEPSWESPWGLGRPGWHIECSAMVRERLGETIDIHVGGSDLIFPHHENEIAQSEAATGKPLARYWMHNGMVKVGGEKMSKSLGNFTTIRDLLAQFDPMAVRLFILQTHYRNPLDFTPKALEAATNGWQTLQEGLLFGYLFGEKLGWDQLSSNSSVREDNPLVQQFQDAVDDDFNFAGGLAVLFEIAKDLRKEGNILVHQEKTETSPEKLKEQWQTLVQLSQVLGLEAHPPQVHRETTDGLTDAEIETLIEQRTQARKAKNFAEGDRIRDDLKAKGITLIDQSGGITKWHRS</sequence>
<name>SYC_GLOC7</name>
<accession>B7K7T8</accession>
<feature type="chain" id="PRO_1000199053" description="Cysteine--tRNA ligase">
    <location>
        <begin position="1"/>
        <end position="486"/>
    </location>
</feature>
<feature type="short sequence motif" description="'HIGH' region">
    <location>
        <begin position="31"/>
        <end position="41"/>
    </location>
</feature>
<feature type="short sequence motif" description="'KMSKS' region">
    <location>
        <begin position="272"/>
        <end position="276"/>
    </location>
</feature>
<feature type="binding site" evidence="1">
    <location>
        <position position="29"/>
    </location>
    <ligand>
        <name>Zn(2+)</name>
        <dbReference type="ChEBI" id="CHEBI:29105"/>
    </ligand>
</feature>
<feature type="binding site" evidence="1">
    <location>
        <position position="215"/>
    </location>
    <ligand>
        <name>Zn(2+)</name>
        <dbReference type="ChEBI" id="CHEBI:29105"/>
    </ligand>
</feature>
<feature type="binding site" evidence="1">
    <location>
        <position position="240"/>
    </location>
    <ligand>
        <name>Zn(2+)</name>
        <dbReference type="ChEBI" id="CHEBI:29105"/>
    </ligand>
</feature>
<feature type="binding site" evidence="1">
    <location>
        <position position="244"/>
    </location>
    <ligand>
        <name>Zn(2+)</name>
        <dbReference type="ChEBI" id="CHEBI:29105"/>
    </ligand>
</feature>
<feature type="binding site" evidence="1">
    <location>
        <position position="275"/>
    </location>
    <ligand>
        <name>ATP</name>
        <dbReference type="ChEBI" id="CHEBI:30616"/>
    </ligand>
</feature>
<keyword id="KW-0030">Aminoacyl-tRNA synthetase</keyword>
<keyword id="KW-0067">ATP-binding</keyword>
<keyword id="KW-0963">Cytoplasm</keyword>
<keyword id="KW-0436">Ligase</keyword>
<keyword id="KW-0479">Metal-binding</keyword>
<keyword id="KW-0547">Nucleotide-binding</keyword>
<keyword id="KW-0648">Protein biosynthesis</keyword>
<keyword id="KW-1185">Reference proteome</keyword>
<keyword id="KW-0862">Zinc</keyword>
<organism>
    <name type="scientific">Gloeothece citriformis (strain PCC 7424)</name>
    <name type="common">Cyanothece sp. (strain PCC 7424)</name>
    <dbReference type="NCBI Taxonomy" id="65393"/>
    <lineage>
        <taxon>Bacteria</taxon>
        <taxon>Bacillati</taxon>
        <taxon>Cyanobacteriota</taxon>
        <taxon>Cyanophyceae</taxon>
        <taxon>Oscillatoriophycideae</taxon>
        <taxon>Chroococcales</taxon>
        <taxon>Aphanothecaceae</taxon>
        <taxon>Gloeothece</taxon>
        <taxon>Gloeothece citriformis</taxon>
    </lineage>
</organism>
<reference key="1">
    <citation type="journal article" date="2011" name="MBio">
        <title>Novel metabolic attributes of the genus Cyanothece, comprising a group of unicellular nitrogen-fixing Cyanobacteria.</title>
        <authorList>
            <person name="Bandyopadhyay A."/>
            <person name="Elvitigala T."/>
            <person name="Welsh E."/>
            <person name="Stockel J."/>
            <person name="Liberton M."/>
            <person name="Min H."/>
            <person name="Sherman L.A."/>
            <person name="Pakrasi H.B."/>
        </authorList>
    </citation>
    <scope>NUCLEOTIDE SEQUENCE [LARGE SCALE GENOMIC DNA]</scope>
    <source>
        <strain>PCC 7424</strain>
    </source>
</reference>